<sequence>MKLNRAIGVIDSGVGGLTVAKELIRQLPKERIIYLGDTARCPYGPRSREEVRQFTWEMTEHLLDLNIKMLVIACNTATAVVLEEMQKQLPIPVVGVIHPGSRTALKMTNTYHVGIIGTIGTVKSGAYEEALKSINNRVMVESLACPPFVELVESGNFESEMAYEVVRETLQPLKNTDIDTLILGCTHYPILGPVIKQVMGDKVQLISSGDETAREVSTILYHSKMLNEGEEQSDHLFLTTGKIGLFKEIASKWFGQPIENVKHIYLEKE</sequence>
<proteinExistence type="evidence at transcript level"/>
<evidence type="ECO:0000255" key="1">
    <source>
        <dbReference type="HAMAP-Rule" id="MF_00258"/>
    </source>
</evidence>
<evidence type="ECO:0000305" key="2"/>
<comment type="function">
    <text evidence="1">Provides the (R)-glutamate required for cell wall biosynthesis.</text>
</comment>
<comment type="catalytic activity">
    <reaction evidence="1">
        <text>L-glutamate = D-glutamate</text>
        <dbReference type="Rhea" id="RHEA:12813"/>
        <dbReference type="ChEBI" id="CHEBI:29985"/>
        <dbReference type="ChEBI" id="CHEBI:29986"/>
        <dbReference type="EC" id="5.1.1.3"/>
    </reaction>
</comment>
<comment type="pathway">
    <text evidence="1">Cell wall biogenesis; peptidoglycan biosynthesis.</text>
</comment>
<comment type="similarity">
    <text evidence="1">Belongs to the aspartate/glutamate racemases family.</text>
</comment>
<protein>
    <recommendedName>
        <fullName evidence="1">Glutamate racemase</fullName>
        <ecNumber evidence="1">5.1.1.3</ecNumber>
    </recommendedName>
</protein>
<name>MURI_BACC1</name>
<gene>
    <name evidence="1" type="primary">murI</name>
    <name type="synonym">glr</name>
    <name type="synonym">racE</name>
    <name type="ordered locus">BCE_4589</name>
</gene>
<dbReference type="EC" id="5.1.1.3" evidence="1"/>
<dbReference type="EMBL" id="Y09719">
    <property type="protein sequence ID" value="CAA70886.1"/>
    <property type="molecule type" value="mRNA"/>
</dbReference>
<dbReference type="EMBL" id="AE017194">
    <property type="protein sequence ID" value="AAS43490.1"/>
    <property type="molecule type" value="Genomic_DNA"/>
</dbReference>
<dbReference type="SMR" id="O31332"/>
<dbReference type="KEGG" id="bca:BCE_4589"/>
<dbReference type="HOGENOM" id="CLU_052344_0_2_9"/>
<dbReference type="UniPathway" id="UPA00219"/>
<dbReference type="Proteomes" id="UP000002527">
    <property type="component" value="Chromosome"/>
</dbReference>
<dbReference type="GO" id="GO:0008881">
    <property type="term" value="F:glutamate racemase activity"/>
    <property type="evidence" value="ECO:0007669"/>
    <property type="project" value="UniProtKB-UniRule"/>
</dbReference>
<dbReference type="GO" id="GO:0071555">
    <property type="term" value="P:cell wall organization"/>
    <property type="evidence" value="ECO:0007669"/>
    <property type="project" value="UniProtKB-KW"/>
</dbReference>
<dbReference type="GO" id="GO:0009252">
    <property type="term" value="P:peptidoglycan biosynthetic process"/>
    <property type="evidence" value="ECO:0007669"/>
    <property type="project" value="UniProtKB-UniRule"/>
</dbReference>
<dbReference type="GO" id="GO:0008360">
    <property type="term" value="P:regulation of cell shape"/>
    <property type="evidence" value="ECO:0007669"/>
    <property type="project" value="UniProtKB-KW"/>
</dbReference>
<dbReference type="FunFam" id="3.40.50.1860:FF:000002">
    <property type="entry name" value="Glutamate racemase"/>
    <property type="match status" value="1"/>
</dbReference>
<dbReference type="Gene3D" id="3.40.50.1860">
    <property type="match status" value="2"/>
</dbReference>
<dbReference type="HAMAP" id="MF_00258">
    <property type="entry name" value="Glu_racemase"/>
    <property type="match status" value="1"/>
</dbReference>
<dbReference type="InterPro" id="IPR015942">
    <property type="entry name" value="Asp/Glu/hydantoin_racemase"/>
</dbReference>
<dbReference type="InterPro" id="IPR001920">
    <property type="entry name" value="Asp/Glu_race"/>
</dbReference>
<dbReference type="InterPro" id="IPR018187">
    <property type="entry name" value="Asp/Glu_racemase_AS_1"/>
</dbReference>
<dbReference type="InterPro" id="IPR033134">
    <property type="entry name" value="Asp/Glu_racemase_AS_2"/>
</dbReference>
<dbReference type="InterPro" id="IPR004391">
    <property type="entry name" value="Glu_race"/>
</dbReference>
<dbReference type="NCBIfam" id="TIGR00067">
    <property type="entry name" value="glut_race"/>
    <property type="match status" value="1"/>
</dbReference>
<dbReference type="NCBIfam" id="NF002035">
    <property type="entry name" value="PRK00865.1-3"/>
    <property type="match status" value="1"/>
</dbReference>
<dbReference type="PANTHER" id="PTHR21198">
    <property type="entry name" value="GLUTAMATE RACEMASE"/>
    <property type="match status" value="1"/>
</dbReference>
<dbReference type="PANTHER" id="PTHR21198:SF2">
    <property type="entry name" value="GLUTAMATE RACEMASE"/>
    <property type="match status" value="1"/>
</dbReference>
<dbReference type="Pfam" id="PF01177">
    <property type="entry name" value="Asp_Glu_race"/>
    <property type="match status" value="1"/>
</dbReference>
<dbReference type="SUPFAM" id="SSF53681">
    <property type="entry name" value="Aspartate/glutamate racemase"/>
    <property type="match status" value="2"/>
</dbReference>
<dbReference type="PROSITE" id="PS00923">
    <property type="entry name" value="ASP_GLU_RACEMASE_1"/>
    <property type="match status" value="1"/>
</dbReference>
<dbReference type="PROSITE" id="PS00924">
    <property type="entry name" value="ASP_GLU_RACEMASE_2"/>
    <property type="match status" value="1"/>
</dbReference>
<keyword id="KW-0133">Cell shape</keyword>
<keyword id="KW-0961">Cell wall biogenesis/degradation</keyword>
<keyword id="KW-0413">Isomerase</keyword>
<keyword id="KW-0573">Peptidoglycan synthesis</keyword>
<reference key="1">
    <citation type="journal article" date="1997" name="FEMS Microbiol. Lett.">
        <title>Insertional inactivation of a Tet(K)/Tet(L) like transporter does not eliminate tetracycline resistance in Bacillus cereus.</title>
        <authorList>
            <person name="Oekstad O.A."/>
            <person name="Groenstad A."/>
            <person name="Lindbaeck T."/>
            <person name="Kolstoe A.-B."/>
        </authorList>
    </citation>
    <scope>NUCLEOTIDE SEQUENCE [GENOMIC DNA]</scope>
</reference>
<reference key="2">
    <citation type="journal article" date="2004" name="Nucleic Acids Res.">
        <title>The genome sequence of Bacillus cereus ATCC 10987 reveals metabolic adaptations and a large plasmid related to Bacillus anthracis pXO1.</title>
        <authorList>
            <person name="Rasko D.A."/>
            <person name="Ravel J."/>
            <person name="Oekstad O.A."/>
            <person name="Helgason E."/>
            <person name="Cer R.Z."/>
            <person name="Jiang L."/>
            <person name="Shores K.A."/>
            <person name="Fouts D.E."/>
            <person name="Tourasse N.J."/>
            <person name="Angiuoli S.V."/>
            <person name="Kolonay J.F."/>
            <person name="Nelson W.C."/>
            <person name="Kolstoe A.-B."/>
            <person name="Fraser C.M."/>
            <person name="Read T.D."/>
        </authorList>
    </citation>
    <scope>NUCLEOTIDE SEQUENCE [LARGE SCALE GENOMIC DNA]</scope>
    <source>
        <strain>ATCC 10987 / NRS 248</strain>
    </source>
</reference>
<organism>
    <name type="scientific">Bacillus cereus (strain ATCC 10987 / NRS 248)</name>
    <dbReference type="NCBI Taxonomy" id="222523"/>
    <lineage>
        <taxon>Bacteria</taxon>
        <taxon>Bacillati</taxon>
        <taxon>Bacillota</taxon>
        <taxon>Bacilli</taxon>
        <taxon>Bacillales</taxon>
        <taxon>Bacillaceae</taxon>
        <taxon>Bacillus</taxon>
        <taxon>Bacillus cereus group</taxon>
    </lineage>
</organism>
<accession>O31332</accession>
<feature type="chain" id="PRO_0000095450" description="Glutamate racemase">
    <location>
        <begin position="1"/>
        <end position="269"/>
    </location>
</feature>
<feature type="active site" description="Proton donor/acceptor" evidence="1">
    <location>
        <position position="74"/>
    </location>
</feature>
<feature type="active site" description="Proton donor/acceptor" evidence="1">
    <location>
        <position position="185"/>
    </location>
</feature>
<feature type="binding site" evidence="1">
    <location>
        <begin position="11"/>
        <end position="12"/>
    </location>
    <ligand>
        <name>substrate</name>
    </ligand>
</feature>
<feature type="binding site" evidence="1">
    <location>
        <begin position="43"/>
        <end position="44"/>
    </location>
    <ligand>
        <name>substrate</name>
    </ligand>
</feature>
<feature type="binding site" evidence="1">
    <location>
        <begin position="75"/>
        <end position="76"/>
    </location>
    <ligand>
        <name>substrate</name>
    </ligand>
</feature>
<feature type="binding site" evidence="1">
    <location>
        <begin position="186"/>
        <end position="187"/>
    </location>
    <ligand>
        <name>substrate</name>
    </ligand>
</feature>
<feature type="sequence conflict" description="In Ref. 1; CAA70886." evidence="2" ref="1">
    <original>C</original>
    <variation>M</variation>
    <location>
        <position position="74"/>
    </location>
</feature>